<proteinExistence type="evidence at protein level"/>
<reference key="1">
    <citation type="submission" date="1997-06" db="EMBL/GenBank/DDBJ databases">
        <authorList>
            <person name="Goedert M."/>
            <person name="Craxton M."/>
        </authorList>
    </citation>
    <scope>NUCLEOTIDE SEQUENCE [MRNA]</scope>
    <source>
        <tissue>Skeletal muscle</tissue>
    </source>
</reference>
<reference key="2">
    <citation type="journal article" date="2005" name="Science">
        <title>The transcriptional landscape of the mammalian genome.</title>
        <authorList>
            <person name="Carninci P."/>
            <person name="Kasukawa T."/>
            <person name="Katayama S."/>
            <person name="Gough J."/>
            <person name="Frith M.C."/>
            <person name="Maeda N."/>
            <person name="Oyama R."/>
            <person name="Ravasi T."/>
            <person name="Lenhard B."/>
            <person name="Wells C."/>
            <person name="Kodzius R."/>
            <person name="Shimokawa K."/>
            <person name="Bajic V.B."/>
            <person name="Brenner S.E."/>
            <person name="Batalov S."/>
            <person name="Forrest A.R."/>
            <person name="Zavolan M."/>
            <person name="Davis M.J."/>
            <person name="Wilming L.G."/>
            <person name="Aidinis V."/>
            <person name="Allen J.E."/>
            <person name="Ambesi-Impiombato A."/>
            <person name="Apweiler R."/>
            <person name="Aturaliya R.N."/>
            <person name="Bailey T.L."/>
            <person name="Bansal M."/>
            <person name="Baxter L."/>
            <person name="Beisel K.W."/>
            <person name="Bersano T."/>
            <person name="Bono H."/>
            <person name="Chalk A.M."/>
            <person name="Chiu K.P."/>
            <person name="Choudhary V."/>
            <person name="Christoffels A."/>
            <person name="Clutterbuck D.R."/>
            <person name="Crowe M.L."/>
            <person name="Dalla E."/>
            <person name="Dalrymple B.P."/>
            <person name="de Bono B."/>
            <person name="Della Gatta G."/>
            <person name="di Bernardo D."/>
            <person name="Down T."/>
            <person name="Engstrom P."/>
            <person name="Fagiolini M."/>
            <person name="Faulkner G."/>
            <person name="Fletcher C.F."/>
            <person name="Fukushima T."/>
            <person name="Furuno M."/>
            <person name="Futaki S."/>
            <person name="Gariboldi M."/>
            <person name="Georgii-Hemming P."/>
            <person name="Gingeras T.R."/>
            <person name="Gojobori T."/>
            <person name="Green R.E."/>
            <person name="Gustincich S."/>
            <person name="Harbers M."/>
            <person name="Hayashi Y."/>
            <person name="Hensch T.K."/>
            <person name="Hirokawa N."/>
            <person name="Hill D."/>
            <person name="Huminiecki L."/>
            <person name="Iacono M."/>
            <person name="Ikeo K."/>
            <person name="Iwama A."/>
            <person name="Ishikawa T."/>
            <person name="Jakt M."/>
            <person name="Kanapin A."/>
            <person name="Katoh M."/>
            <person name="Kawasawa Y."/>
            <person name="Kelso J."/>
            <person name="Kitamura H."/>
            <person name="Kitano H."/>
            <person name="Kollias G."/>
            <person name="Krishnan S.P."/>
            <person name="Kruger A."/>
            <person name="Kummerfeld S.K."/>
            <person name="Kurochkin I.V."/>
            <person name="Lareau L.F."/>
            <person name="Lazarevic D."/>
            <person name="Lipovich L."/>
            <person name="Liu J."/>
            <person name="Liuni S."/>
            <person name="McWilliam S."/>
            <person name="Madan Babu M."/>
            <person name="Madera M."/>
            <person name="Marchionni L."/>
            <person name="Matsuda H."/>
            <person name="Matsuzawa S."/>
            <person name="Miki H."/>
            <person name="Mignone F."/>
            <person name="Miyake S."/>
            <person name="Morris K."/>
            <person name="Mottagui-Tabar S."/>
            <person name="Mulder N."/>
            <person name="Nakano N."/>
            <person name="Nakauchi H."/>
            <person name="Ng P."/>
            <person name="Nilsson R."/>
            <person name="Nishiguchi S."/>
            <person name="Nishikawa S."/>
            <person name="Nori F."/>
            <person name="Ohara O."/>
            <person name="Okazaki Y."/>
            <person name="Orlando V."/>
            <person name="Pang K.C."/>
            <person name="Pavan W.J."/>
            <person name="Pavesi G."/>
            <person name="Pesole G."/>
            <person name="Petrovsky N."/>
            <person name="Piazza S."/>
            <person name="Reed J."/>
            <person name="Reid J.F."/>
            <person name="Ring B.Z."/>
            <person name="Ringwald M."/>
            <person name="Rost B."/>
            <person name="Ruan Y."/>
            <person name="Salzberg S.L."/>
            <person name="Sandelin A."/>
            <person name="Schneider C."/>
            <person name="Schoenbach C."/>
            <person name="Sekiguchi K."/>
            <person name="Semple C.A."/>
            <person name="Seno S."/>
            <person name="Sessa L."/>
            <person name="Sheng Y."/>
            <person name="Shibata Y."/>
            <person name="Shimada H."/>
            <person name="Shimada K."/>
            <person name="Silva D."/>
            <person name="Sinclair B."/>
            <person name="Sperling S."/>
            <person name="Stupka E."/>
            <person name="Sugiura K."/>
            <person name="Sultana R."/>
            <person name="Takenaka Y."/>
            <person name="Taki K."/>
            <person name="Tammoja K."/>
            <person name="Tan S.L."/>
            <person name="Tang S."/>
            <person name="Taylor M.S."/>
            <person name="Tegner J."/>
            <person name="Teichmann S.A."/>
            <person name="Ueda H.R."/>
            <person name="van Nimwegen E."/>
            <person name="Verardo R."/>
            <person name="Wei C.L."/>
            <person name="Yagi K."/>
            <person name="Yamanishi H."/>
            <person name="Zabarovsky E."/>
            <person name="Zhu S."/>
            <person name="Zimmer A."/>
            <person name="Hide W."/>
            <person name="Bult C."/>
            <person name="Grimmond S.M."/>
            <person name="Teasdale R.D."/>
            <person name="Liu E.T."/>
            <person name="Brusic V."/>
            <person name="Quackenbush J."/>
            <person name="Wahlestedt C."/>
            <person name="Mattick J.S."/>
            <person name="Hume D.A."/>
            <person name="Kai C."/>
            <person name="Sasaki D."/>
            <person name="Tomaru Y."/>
            <person name="Fukuda S."/>
            <person name="Kanamori-Katayama M."/>
            <person name="Suzuki M."/>
            <person name="Aoki J."/>
            <person name="Arakawa T."/>
            <person name="Iida J."/>
            <person name="Imamura K."/>
            <person name="Itoh M."/>
            <person name="Kato T."/>
            <person name="Kawaji H."/>
            <person name="Kawagashira N."/>
            <person name="Kawashima T."/>
            <person name="Kojima M."/>
            <person name="Kondo S."/>
            <person name="Konno H."/>
            <person name="Nakano K."/>
            <person name="Ninomiya N."/>
            <person name="Nishio T."/>
            <person name="Okada M."/>
            <person name="Plessy C."/>
            <person name="Shibata K."/>
            <person name="Shiraki T."/>
            <person name="Suzuki S."/>
            <person name="Tagami M."/>
            <person name="Waki K."/>
            <person name="Watahiki A."/>
            <person name="Okamura-Oho Y."/>
            <person name="Suzuki H."/>
            <person name="Kawai J."/>
            <person name="Hayashizaki Y."/>
        </authorList>
    </citation>
    <scope>NUCLEOTIDE SEQUENCE [LARGE SCALE MRNA]</scope>
    <source>
        <strain>C57BL/6J</strain>
        <tissue>Embryo</tissue>
    </source>
</reference>
<reference key="3">
    <citation type="journal article" date="2004" name="Genome Res.">
        <title>The status, quality, and expansion of the NIH full-length cDNA project: the Mammalian Gene Collection (MGC).</title>
        <authorList>
            <consortium name="The MGC Project Team"/>
        </authorList>
    </citation>
    <scope>NUCLEOTIDE SEQUENCE [LARGE SCALE MRNA]</scope>
    <source>
        <strain>FVB/N</strain>
    </source>
</reference>
<reference key="4">
    <citation type="journal article" date="2002" name="J. Mol. Cell. Cardiol.">
        <title>Cardiac expression and subcellular localization of the p38 mitogen-activated protein kinase member, stress-activated protein kinase-3 (SAPK3).</title>
        <authorList>
            <person name="Court N.W."/>
            <person name="dos Remedios C.G."/>
            <person name="Cordell J."/>
            <person name="Bogoyevitch M.A."/>
        </authorList>
    </citation>
    <scope>TISSUE SPECIFICITY</scope>
</reference>
<reference key="5">
    <citation type="journal article" date="2009" name="J. Cell Biol.">
        <title>p38-{gamma}-dependent gene silencing restricts entry into the myogenic differentiation program.</title>
        <authorList>
            <person name="Gillespie M.A."/>
            <person name="Le Grand F."/>
            <person name="Scime A."/>
            <person name="Kuang S."/>
            <person name="von Maltzahn J."/>
            <person name="Seale V."/>
            <person name="Cuenda A."/>
            <person name="Ranish J.A."/>
            <person name="Rudnicki M.A."/>
        </authorList>
    </citation>
    <scope>FUNCTION</scope>
</reference>
<reference key="6">
    <citation type="journal article" date="2010" name="Cell">
        <title>A tissue-specific atlas of mouse protein phosphorylation and expression.</title>
        <authorList>
            <person name="Huttlin E.L."/>
            <person name="Jedrychowski M.P."/>
            <person name="Elias J.E."/>
            <person name="Goswami T."/>
            <person name="Rad R."/>
            <person name="Beausoleil S.A."/>
            <person name="Villen J."/>
            <person name="Haas W."/>
            <person name="Sowa M.E."/>
            <person name="Gygi S.P."/>
        </authorList>
    </citation>
    <scope>PHOSPHORYLATION [LARGE SCALE ANALYSIS] AT THR-183 AND TYR-185</scope>
    <scope>IDENTIFICATION BY MASS SPECTROMETRY [LARGE SCALE ANALYSIS]</scope>
    <source>
        <tissue>Heart</tissue>
        <tissue>Lung</tissue>
    </source>
</reference>
<reference key="7">
    <citation type="journal article" date="2010" name="Cell. Signal.">
        <title>Differential activation of p38MAPK isoforms by MKK6 and MKK3.</title>
        <authorList>
            <person name="Remy G."/>
            <person name="Risco A.M."/>
            <person name="Inesta-Vaquera F.A."/>
            <person name="Gonzalez-Teran B."/>
            <person name="Sabio G."/>
            <person name="Davis R.J."/>
            <person name="Cuenda A."/>
        </authorList>
    </citation>
    <scope>PHOSPHORYLATION</scope>
    <scope>ACTIVITY REGULATION</scope>
</reference>
<reference key="8">
    <citation type="journal article" date="2010" name="Protein Cell">
        <title>p38gamma regulates UV-induced checkpoint signaling and repair of UV-induced DNA damage.</title>
        <authorList>
            <person name="Wu C.C."/>
            <person name="Wu X."/>
            <person name="Han J."/>
            <person name="Sun P."/>
        </authorList>
    </citation>
    <scope>FUNCTION</scope>
</reference>
<reference key="9">
    <citation type="journal article" date="2011" name="Carcinogenesis">
        <title>Evidence of p38gamma and p38delta involvement in cell transformation processes.</title>
        <authorList>
            <person name="Cerezo-Guisado M.I."/>
            <person name="del Reino P."/>
            <person name="Remy G."/>
            <person name="Kuma Y."/>
            <person name="Arthur J.S."/>
            <person name="Gallego-Ortega D."/>
            <person name="Cuenda A."/>
        </authorList>
    </citation>
    <scope>FUNCTION</scope>
</reference>
<reference key="10">
    <citation type="journal article" date="2010" name="Biochem. J.">
        <title>Mechanisms and functions of p38 MAPK signalling.</title>
        <authorList>
            <person name="Cuadrado A."/>
            <person name="Nebreda A.R."/>
        </authorList>
    </citation>
    <scope>REVIEW ON ACTIVITY REGULATION</scope>
    <scope>REVIEW ON FUNCTION</scope>
</reference>
<accession>O08911</accession>
<accession>Q9D0M4</accession>
<dbReference type="EC" id="2.7.11.24"/>
<dbReference type="EMBL" id="Y13439">
    <property type="protein sequence ID" value="CAA73850.1"/>
    <property type="molecule type" value="mRNA"/>
</dbReference>
<dbReference type="EMBL" id="AK011286">
    <property type="status" value="NOT_ANNOTATED_CDS"/>
    <property type="molecule type" value="mRNA"/>
</dbReference>
<dbReference type="EMBL" id="BC021640">
    <property type="protein sequence ID" value="AAH21640.1"/>
    <property type="molecule type" value="mRNA"/>
</dbReference>
<dbReference type="CCDS" id="CCDS27740.1"/>
<dbReference type="RefSeq" id="NP_038899.1">
    <property type="nucleotide sequence ID" value="NM_013871.4"/>
</dbReference>
<dbReference type="SMR" id="O08911"/>
<dbReference type="BioGRID" id="205924">
    <property type="interactions" value="5"/>
</dbReference>
<dbReference type="DIP" id="DIP-49622N"/>
<dbReference type="FunCoup" id="O08911">
    <property type="interactions" value="1965"/>
</dbReference>
<dbReference type="IntAct" id="O08911">
    <property type="interactions" value="2"/>
</dbReference>
<dbReference type="STRING" id="10090.ENSMUSP00000086207"/>
<dbReference type="BindingDB" id="O08911"/>
<dbReference type="ChEMBL" id="CHEMBL2111473"/>
<dbReference type="iPTMnet" id="O08911"/>
<dbReference type="PhosphoSitePlus" id="O08911"/>
<dbReference type="jPOST" id="O08911"/>
<dbReference type="PaxDb" id="10090-ENSMUSP00000086207"/>
<dbReference type="PeptideAtlas" id="O08911"/>
<dbReference type="ProteomicsDB" id="290254"/>
<dbReference type="Antibodypedia" id="14291">
    <property type="antibodies" value="552 antibodies from 40 providers"/>
</dbReference>
<dbReference type="DNASU" id="29857"/>
<dbReference type="Ensembl" id="ENSMUST00000088827.8">
    <property type="protein sequence ID" value="ENSMUSP00000086207.7"/>
    <property type="gene ID" value="ENSMUSG00000022610.11"/>
</dbReference>
<dbReference type="GeneID" id="29857"/>
<dbReference type="KEGG" id="mmu:29857"/>
<dbReference type="UCSC" id="uc007xfl.2">
    <property type="organism name" value="mouse"/>
</dbReference>
<dbReference type="AGR" id="MGI:1353438"/>
<dbReference type="CTD" id="6300"/>
<dbReference type="MGI" id="MGI:1353438">
    <property type="gene designation" value="Mapk12"/>
</dbReference>
<dbReference type="VEuPathDB" id="HostDB:ENSMUSG00000022610"/>
<dbReference type="eggNOG" id="KOG0660">
    <property type="taxonomic scope" value="Eukaryota"/>
</dbReference>
<dbReference type="GeneTree" id="ENSGT00940000156189"/>
<dbReference type="HOGENOM" id="CLU_000288_181_1_1"/>
<dbReference type="InParanoid" id="O08911"/>
<dbReference type="OMA" id="IAMMRFF"/>
<dbReference type="OrthoDB" id="192887at2759"/>
<dbReference type="PhylomeDB" id="O08911"/>
<dbReference type="TreeFam" id="TF105100"/>
<dbReference type="Reactome" id="R-MMU-168638">
    <property type="pathway name" value="NOD1/2 Signaling Pathway"/>
</dbReference>
<dbReference type="Reactome" id="R-MMU-4420097">
    <property type="pathway name" value="VEGFA-VEGFR2 Pathway"/>
</dbReference>
<dbReference type="Reactome" id="R-MMU-525793">
    <property type="pathway name" value="Myogenesis"/>
</dbReference>
<dbReference type="Reactome" id="R-MMU-5675221">
    <property type="pathway name" value="Negative regulation of MAPK pathway"/>
</dbReference>
<dbReference type="BioGRID-ORCS" id="29857">
    <property type="hits" value="0 hits in 82 CRISPR screens"/>
</dbReference>
<dbReference type="PRO" id="PR:O08911"/>
<dbReference type="Proteomes" id="UP000000589">
    <property type="component" value="Chromosome 15"/>
</dbReference>
<dbReference type="RNAct" id="O08911">
    <property type="molecule type" value="protein"/>
</dbReference>
<dbReference type="Bgee" id="ENSMUSG00000022610">
    <property type="expression patterns" value="Expressed in hindlimb stylopod muscle and 209 other cell types or tissues"/>
</dbReference>
<dbReference type="GO" id="GO:0005739">
    <property type="term" value="C:mitochondrion"/>
    <property type="evidence" value="ECO:0007669"/>
    <property type="project" value="UniProtKB-SubCell"/>
</dbReference>
<dbReference type="GO" id="GO:0005654">
    <property type="term" value="C:nucleoplasm"/>
    <property type="evidence" value="ECO:0000304"/>
    <property type="project" value="Reactome"/>
</dbReference>
<dbReference type="GO" id="GO:0005524">
    <property type="term" value="F:ATP binding"/>
    <property type="evidence" value="ECO:0007669"/>
    <property type="project" value="UniProtKB-KW"/>
</dbReference>
<dbReference type="GO" id="GO:0000287">
    <property type="term" value="F:magnesium ion binding"/>
    <property type="evidence" value="ECO:0007669"/>
    <property type="project" value="Ensembl"/>
</dbReference>
<dbReference type="GO" id="GO:0004707">
    <property type="term" value="F:MAP kinase activity"/>
    <property type="evidence" value="ECO:0007669"/>
    <property type="project" value="UniProtKB-EC"/>
</dbReference>
<dbReference type="GO" id="GO:0106310">
    <property type="term" value="F:protein serine kinase activity"/>
    <property type="evidence" value="ECO:0007669"/>
    <property type="project" value="RHEA"/>
</dbReference>
<dbReference type="GO" id="GO:0004674">
    <property type="term" value="F:protein serine/threonine kinase activity"/>
    <property type="evidence" value="ECO:0000304"/>
    <property type="project" value="Reactome"/>
</dbReference>
<dbReference type="GO" id="GO:0045445">
    <property type="term" value="P:myoblast differentiation"/>
    <property type="evidence" value="ECO:0007669"/>
    <property type="project" value="Ensembl"/>
</dbReference>
<dbReference type="GO" id="GO:0045786">
    <property type="term" value="P:negative regulation of cell cycle"/>
    <property type="evidence" value="ECO:0007669"/>
    <property type="project" value="Ensembl"/>
</dbReference>
<dbReference type="CDD" id="cd07880">
    <property type="entry name" value="STKc_p38gamma"/>
    <property type="match status" value="1"/>
</dbReference>
<dbReference type="FunFam" id="1.10.510.10:FF:000170">
    <property type="entry name" value="Mitogen-activated protein kinase"/>
    <property type="match status" value="1"/>
</dbReference>
<dbReference type="FunFam" id="3.30.200.20:FF:000769">
    <property type="entry name" value="Mitogen-activated protein kinase 14"/>
    <property type="match status" value="1"/>
</dbReference>
<dbReference type="Gene3D" id="3.30.200.20">
    <property type="entry name" value="Phosphorylase Kinase, domain 1"/>
    <property type="match status" value="1"/>
</dbReference>
<dbReference type="Gene3D" id="1.10.510.10">
    <property type="entry name" value="Transferase(Phosphotransferase) domain 1"/>
    <property type="match status" value="1"/>
</dbReference>
<dbReference type="InterPro" id="IPR011009">
    <property type="entry name" value="Kinase-like_dom_sf"/>
</dbReference>
<dbReference type="InterPro" id="IPR050117">
    <property type="entry name" value="MAP_kinase"/>
</dbReference>
<dbReference type="InterPro" id="IPR003527">
    <property type="entry name" value="MAP_kinase_CS"/>
</dbReference>
<dbReference type="InterPro" id="IPR038786">
    <property type="entry name" value="MAPK12"/>
</dbReference>
<dbReference type="InterPro" id="IPR008352">
    <property type="entry name" value="MAPK_p38-like"/>
</dbReference>
<dbReference type="InterPro" id="IPR000719">
    <property type="entry name" value="Prot_kinase_dom"/>
</dbReference>
<dbReference type="InterPro" id="IPR017441">
    <property type="entry name" value="Protein_kinase_ATP_BS"/>
</dbReference>
<dbReference type="PANTHER" id="PTHR24055">
    <property type="entry name" value="MITOGEN-ACTIVATED PROTEIN KINASE"/>
    <property type="match status" value="1"/>
</dbReference>
<dbReference type="Pfam" id="PF00069">
    <property type="entry name" value="Pkinase"/>
    <property type="match status" value="1"/>
</dbReference>
<dbReference type="PRINTS" id="PR01773">
    <property type="entry name" value="P38MAPKINASE"/>
</dbReference>
<dbReference type="SMART" id="SM00220">
    <property type="entry name" value="S_TKc"/>
    <property type="match status" value="1"/>
</dbReference>
<dbReference type="SUPFAM" id="SSF56112">
    <property type="entry name" value="Protein kinase-like (PK-like)"/>
    <property type="match status" value="1"/>
</dbReference>
<dbReference type="PROSITE" id="PS01351">
    <property type="entry name" value="MAPK"/>
    <property type="match status" value="1"/>
</dbReference>
<dbReference type="PROSITE" id="PS00107">
    <property type="entry name" value="PROTEIN_KINASE_ATP"/>
    <property type="match status" value="1"/>
</dbReference>
<dbReference type="PROSITE" id="PS50011">
    <property type="entry name" value="PROTEIN_KINASE_DOM"/>
    <property type="match status" value="1"/>
</dbReference>
<protein>
    <recommendedName>
        <fullName>Mitogen-activated protein kinase 12</fullName>
        <shortName>MAP kinase 12</shortName>
        <shortName>MAPK 12</shortName>
        <ecNumber>2.7.11.24</ecNumber>
    </recommendedName>
    <alternativeName>
        <fullName>Extracellular signal-regulated kinase 6</fullName>
        <shortName>ERK-6</shortName>
    </alternativeName>
    <alternativeName>
        <fullName>Mitogen-activated protein kinase p38 gamma</fullName>
        <shortName>MAP kinase p38 gamma</shortName>
    </alternativeName>
    <alternativeName>
        <fullName>Stress-activated protein kinase 3</fullName>
    </alternativeName>
</protein>
<feature type="chain" id="PRO_0000186283" description="Mitogen-activated protein kinase 12">
    <location>
        <begin position="1"/>
        <end position="367"/>
    </location>
</feature>
<feature type="domain" description="Protein kinase" evidence="4">
    <location>
        <begin position="27"/>
        <end position="311"/>
    </location>
</feature>
<feature type="short sequence motif" description="TXY">
    <location>
        <begin position="183"/>
        <end position="185"/>
    </location>
</feature>
<feature type="active site" description="Proton acceptor" evidence="4">
    <location>
        <position position="153"/>
    </location>
</feature>
<feature type="binding site" evidence="4">
    <location>
        <begin position="33"/>
        <end position="41"/>
    </location>
    <ligand>
        <name>ATP</name>
        <dbReference type="ChEBI" id="CHEBI:30616"/>
    </ligand>
</feature>
<feature type="binding site" evidence="4">
    <location>
        <position position="56"/>
    </location>
    <ligand>
        <name>ATP</name>
        <dbReference type="ChEBI" id="CHEBI:30616"/>
    </ligand>
</feature>
<feature type="modified residue" description="Phosphothreonine" evidence="11">
    <location>
        <position position="183"/>
    </location>
</feature>
<feature type="modified residue" description="Phosphotyrosine" evidence="11">
    <location>
        <position position="185"/>
    </location>
</feature>
<name>MK12_MOUSE</name>
<keyword id="KW-0067">ATP-binding</keyword>
<keyword id="KW-0131">Cell cycle</keyword>
<keyword id="KW-0963">Cytoplasm</keyword>
<keyword id="KW-0418">Kinase</keyword>
<keyword id="KW-0460">Magnesium</keyword>
<keyword id="KW-0479">Metal-binding</keyword>
<keyword id="KW-0496">Mitochondrion</keyword>
<keyword id="KW-0547">Nucleotide-binding</keyword>
<keyword id="KW-0539">Nucleus</keyword>
<keyword id="KW-0597">Phosphoprotein</keyword>
<keyword id="KW-1185">Reference proteome</keyword>
<keyword id="KW-0723">Serine/threonine-protein kinase</keyword>
<keyword id="KW-0346">Stress response</keyword>
<keyword id="KW-0804">Transcription</keyword>
<keyword id="KW-0805">Transcription regulation</keyword>
<keyword id="KW-0808">Transferase</keyword>
<keyword id="KW-0832">Ubl conjugation</keyword>
<sequence length="367" mass="42043">MSSPPPARKGFYRQEVTKTAWEVRAVYQDLQPVGSGAYGAVCSAVDSRTGNKVAIKKLYRPFQSELFAKRAYRELRLLKHMRHENVIGLLDVFTPDESLDDFTDFYLVMPFMGTDLGKLMKHETLSEDRIQFLVYQMLKGLKYIHAAGVIHRDLKPGNLAVNEDCELKILDFGLARQADSEMTGYVVTRWYRAPEVILNWMRYTQTVDIWSVGCIMAEMITGKILFKGNDHLDQLKEIMKITGTPPPEFVQKLQSAEAKNYMEGLPELEKKDFASVLTNASPQAVNLLERMLVLDAEQRVTAAEALTHPYFESLRDTEDEPKAQKYDDSFDDVDRTLEEWKRVTYKEVLSFKPPRQLGARVPKETAL</sequence>
<evidence type="ECO:0000250" key="1"/>
<evidence type="ECO:0000250" key="2">
    <source>
        <dbReference type="UniProtKB" id="P53778"/>
    </source>
</evidence>
<evidence type="ECO:0000250" key="3">
    <source>
        <dbReference type="UniProtKB" id="Q63538"/>
    </source>
</evidence>
<evidence type="ECO:0000255" key="4">
    <source>
        <dbReference type="PROSITE-ProRule" id="PRU00159"/>
    </source>
</evidence>
<evidence type="ECO:0000269" key="5">
    <source>
    </source>
</evidence>
<evidence type="ECO:0000269" key="6">
    <source>
    </source>
</evidence>
<evidence type="ECO:0000269" key="7">
    <source>
    </source>
</evidence>
<evidence type="ECO:0000269" key="8">
    <source>
    </source>
</evidence>
<evidence type="ECO:0000269" key="9">
    <source>
    </source>
</evidence>
<evidence type="ECO:0000305" key="10"/>
<evidence type="ECO:0007744" key="11">
    <source>
    </source>
</evidence>
<organism>
    <name type="scientific">Mus musculus</name>
    <name type="common">Mouse</name>
    <dbReference type="NCBI Taxonomy" id="10090"/>
    <lineage>
        <taxon>Eukaryota</taxon>
        <taxon>Metazoa</taxon>
        <taxon>Chordata</taxon>
        <taxon>Craniata</taxon>
        <taxon>Vertebrata</taxon>
        <taxon>Euteleostomi</taxon>
        <taxon>Mammalia</taxon>
        <taxon>Eutheria</taxon>
        <taxon>Euarchontoglires</taxon>
        <taxon>Glires</taxon>
        <taxon>Rodentia</taxon>
        <taxon>Myomorpha</taxon>
        <taxon>Muroidea</taxon>
        <taxon>Muridae</taxon>
        <taxon>Murinae</taxon>
        <taxon>Mus</taxon>
        <taxon>Mus</taxon>
    </lineage>
</organism>
<gene>
    <name type="primary">Mapk12</name>
    <name type="synonym">Sapk3</name>
</gene>
<comment type="function">
    <text evidence="7 8 9">Serine/threonine kinase which acts as an essential component of the MAP kinase signal transduction pathway. MAPK12 is one of the four p38 MAPKs which play an important role in the cascades of cellular responses evoked by extracellular stimuli such as pro-inflammatory cytokines or physical stress leading to direct activation of transcription factors such as ELK1 and ATF2. Accordingly, p38 MAPKs phosphorylate a broad range of proteins and it has been estimated that they may have approximately 200 to 300 substrates each. Some of the targets are downstream kinases such as MAPKAPK2, which are activated through phosphorylation and further phosphorylate additional targets. Plays a role in myoblast differentiation and also in the down-regulation of cyclin D1 in response to hypoxia in adrenal cells suggesting MAPK12 may inhibit cell proliferation while promoting differentiation. Phosphorylates DLG1. Following osmotic shock, MAPK12 in the cell nucleus increases its association with nuclear DLG1, thereby causing dissociation of DLG1-SFPQ complexes. This function is independent of its catalytic activity and could affect mRNA processing and/or gene transcription to aid cell adaptation to osmolarity changes in the environment. Regulates UV-induced checkpoint signaling and repair of UV-induced DNA damage and G2 arrest after gamma-radiation exposure. MAPK12 is involved in the regulation of SLC2A1 expression and basal glucose uptake in L6 myotubes; and negatively regulates SLC2A4 expression and contraction-mediated glucose uptake in adult skeletal muscle. C-Jun (JUN) phosphorylation is stimulated by MAPK14 and inhibited by MAPK12, leading to a distinct AP-1 regulation. MAPK12 is required for the normal kinetochore localization of PLK1, prevents chromosomal instability and supports mitotic cell viability. MAPK12-signaling is also positively regulating the expansion of transient amplifying myogenic precursor cells during muscle growth and regeneration.</text>
</comment>
<comment type="catalytic activity">
    <reaction>
        <text>L-seryl-[protein] + ATP = O-phospho-L-seryl-[protein] + ADP + H(+)</text>
        <dbReference type="Rhea" id="RHEA:17989"/>
        <dbReference type="Rhea" id="RHEA-COMP:9863"/>
        <dbReference type="Rhea" id="RHEA-COMP:11604"/>
        <dbReference type="ChEBI" id="CHEBI:15378"/>
        <dbReference type="ChEBI" id="CHEBI:29999"/>
        <dbReference type="ChEBI" id="CHEBI:30616"/>
        <dbReference type="ChEBI" id="CHEBI:83421"/>
        <dbReference type="ChEBI" id="CHEBI:456216"/>
        <dbReference type="EC" id="2.7.11.24"/>
    </reaction>
</comment>
<comment type="catalytic activity">
    <reaction>
        <text>L-threonyl-[protein] + ATP = O-phospho-L-threonyl-[protein] + ADP + H(+)</text>
        <dbReference type="Rhea" id="RHEA:46608"/>
        <dbReference type="Rhea" id="RHEA-COMP:11060"/>
        <dbReference type="Rhea" id="RHEA-COMP:11605"/>
        <dbReference type="ChEBI" id="CHEBI:15378"/>
        <dbReference type="ChEBI" id="CHEBI:30013"/>
        <dbReference type="ChEBI" id="CHEBI:30616"/>
        <dbReference type="ChEBI" id="CHEBI:61977"/>
        <dbReference type="ChEBI" id="CHEBI:456216"/>
        <dbReference type="EC" id="2.7.11.24"/>
    </reaction>
</comment>
<comment type="cofactor">
    <cofactor>
        <name>Mg(2+)</name>
        <dbReference type="ChEBI" id="CHEBI:18420"/>
    </cofactor>
    <text>Binds 2 magnesium ions.</text>
</comment>
<comment type="activity regulation">
    <text evidence="6">Activated by phosphorylation on threonine and tyrosine. MAP2K3/MKK3 and MAP2K6/MKK6 are both essential for the activation of MAPK12 induced by environmental stress, whereas MAP2K6/MKK6 is the major MAPK12 activator in response to TNF-alpha.</text>
</comment>
<comment type="subunit">
    <text evidence="2 3">Monomer. Interacts with the PDZ domain of the syntrophin SNTA1 (By similarity). Interacts with SH3BP5, LIN7C, SCRIB and SYNJ2BP (By similarity). Interacts with PTPN4; this interaction induces the activation of PTPN4 phosphatase activity.</text>
</comment>
<comment type="subcellular location">
    <subcellularLocation>
        <location evidence="1">Cytoplasm</location>
    </subcellularLocation>
    <subcellularLocation>
        <location evidence="1">Nucleus</location>
    </subcellularLocation>
    <subcellularLocation>
        <location evidence="1">Mitochondrion</location>
    </subcellularLocation>
    <text evidence="1">Mitochondrial when associated with SH3BP5. In skeletal muscle colocalizes with SNTA1 at the neuromuscular junction and throughout the sarcolemma.</text>
</comment>
<comment type="tissue specificity">
    <text evidence="5">Highly expressed in skeletal muscle. Also expressed in the heart, particularly in cardiac myocytes, lung, thymus and testes.</text>
</comment>
<comment type="domain">
    <text>The TXY motif contains the threonine and tyrosine residues whose phosphorylation activates the MAP kinases.</text>
</comment>
<comment type="PTM">
    <text evidence="6">Dually phosphorylated on Thr-183 and Tyr-185 by MAP2K3/MKK3 and MAP2K6/MKK6, which activates the enzyme.</text>
</comment>
<comment type="PTM">
    <text evidence="1">Ubiquitinated. Ubiquitination leads to degradation by the proteasome pathway (By similarity).</text>
</comment>
<comment type="similarity">
    <text evidence="10">Belongs to the protein kinase superfamily. CMGC Ser/Thr protein kinase family. MAP kinase subfamily.</text>
</comment>